<reference key="1">
    <citation type="journal article" date="1990" name="Gene">
        <title>Cloning and characterization of the Bacillus sphaericus genes controlling the bioconversion of pimelate into dethiobiotin.</title>
        <authorList>
            <person name="Gloeckler R."/>
            <person name="Ohsawa I."/>
            <person name="Speck D."/>
            <person name="Ledoux C."/>
            <person name="Bernard S."/>
            <person name="Zinsius M."/>
            <person name="Villeval D."/>
            <person name="Kisou T."/>
            <person name="Kamogawa K."/>
            <person name="Lemoine Y."/>
        </authorList>
    </citation>
    <scope>NUCLEOTIDE SEQUENCE [GENOMIC DNA]</scope>
    <source>
        <strain>ATCC 10208 / DSM 5019 / NBRC 3525 / NCIMB 11935 / NRS 966 / 1911</strain>
    </source>
</reference>
<name>BIOD_LYSSH</name>
<proteinExistence type="inferred from homology"/>
<sequence length="234" mass="26488">MQHFWVVGTDTDVGKTFVTTLLMRNLQKQGVRVTPYKPVQTGEVYDGEQAYYFDTAMYEKYSLQLLDRENLNGYSFKEAASPHFAAQLEGQQIDTQQLLKQMQLLQQTWDVVICEGAGGLFVPLDACGETTLLDVIVESKLPVVVVTRTALGTINHTLLTLEALTTRKIEVLGLVFNGDMGSRMEQDNIQTILQYYTLPYMTIPKLEELSDINEYAITGTSLFERLIRRETSIN</sequence>
<feature type="chain" id="PRO_0000187948" description="ATP-dependent dethiobiotin synthetase BioD">
    <location>
        <begin position="1"/>
        <end position="234"/>
    </location>
</feature>
<feature type="active site" evidence="1">
    <location>
        <position position="37"/>
    </location>
</feature>
<feature type="binding site" evidence="1">
    <location>
        <begin position="12"/>
        <end position="17"/>
    </location>
    <ligand>
        <name>ATP</name>
        <dbReference type="ChEBI" id="CHEBI:30616"/>
    </ligand>
</feature>
<feature type="binding site" evidence="1">
    <location>
        <position position="16"/>
    </location>
    <ligand>
        <name>Mg(2+)</name>
        <dbReference type="ChEBI" id="CHEBI:18420"/>
    </ligand>
</feature>
<feature type="binding site" evidence="1">
    <location>
        <position position="41"/>
    </location>
    <ligand>
        <name>substrate</name>
    </ligand>
</feature>
<feature type="binding site" evidence="1">
    <location>
        <position position="54"/>
    </location>
    <ligand>
        <name>ATP</name>
        <dbReference type="ChEBI" id="CHEBI:30616"/>
    </ligand>
</feature>
<feature type="binding site" evidence="1">
    <location>
        <position position="54"/>
    </location>
    <ligand>
        <name>Mg(2+)</name>
        <dbReference type="ChEBI" id="CHEBI:18420"/>
    </ligand>
</feature>
<feature type="binding site" evidence="1">
    <location>
        <begin position="115"/>
        <end position="118"/>
    </location>
    <ligand>
        <name>ATP</name>
        <dbReference type="ChEBI" id="CHEBI:30616"/>
    </ligand>
</feature>
<feature type="binding site" evidence="1">
    <location>
        <position position="115"/>
    </location>
    <ligand>
        <name>Mg(2+)</name>
        <dbReference type="ChEBI" id="CHEBI:18420"/>
    </ligand>
</feature>
<evidence type="ECO:0000255" key="1">
    <source>
        <dbReference type="HAMAP-Rule" id="MF_00336"/>
    </source>
</evidence>
<gene>
    <name evidence="1" type="primary">bioD</name>
</gene>
<organism>
    <name type="scientific">Lysinibacillus sphaericus</name>
    <name type="common">Bacillus sphaericus</name>
    <dbReference type="NCBI Taxonomy" id="1421"/>
    <lineage>
        <taxon>Bacteria</taxon>
        <taxon>Bacillati</taxon>
        <taxon>Bacillota</taxon>
        <taxon>Bacilli</taxon>
        <taxon>Bacillales</taxon>
        <taxon>Bacillaceae</taxon>
        <taxon>Lysinibacillus</taxon>
    </lineage>
</organism>
<accession>P22818</accession>
<keyword id="KW-0067">ATP-binding</keyword>
<keyword id="KW-0093">Biotin biosynthesis</keyword>
<keyword id="KW-0963">Cytoplasm</keyword>
<keyword id="KW-0436">Ligase</keyword>
<keyword id="KW-0460">Magnesium</keyword>
<keyword id="KW-0479">Metal-binding</keyword>
<keyword id="KW-0547">Nucleotide-binding</keyword>
<dbReference type="EC" id="6.3.3.3" evidence="1"/>
<dbReference type="EMBL" id="M29292">
    <property type="protein sequence ID" value="AAB02324.1"/>
    <property type="molecule type" value="Genomic_DNA"/>
</dbReference>
<dbReference type="PIR" id="JQ0506">
    <property type="entry name" value="JQ0506"/>
</dbReference>
<dbReference type="RefSeq" id="WP_024361132.1">
    <property type="nucleotide sequence ID" value="NZ_UFSZ01000001.1"/>
</dbReference>
<dbReference type="SMR" id="P22818"/>
<dbReference type="GeneID" id="48276407"/>
<dbReference type="UniPathway" id="UPA00078">
    <property type="reaction ID" value="UER00161"/>
</dbReference>
<dbReference type="GO" id="GO:0005829">
    <property type="term" value="C:cytosol"/>
    <property type="evidence" value="ECO:0007669"/>
    <property type="project" value="TreeGrafter"/>
</dbReference>
<dbReference type="GO" id="GO:0005524">
    <property type="term" value="F:ATP binding"/>
    <property type="evidence" value="ECO:0007669"/>
    <property type="project" value="UniProtKB-UniRule"/>
</dbReference>
<dbReference type="GO" id="GO:0004141">
    <property type="term" value="F:dethiobiotin synthase activity"/>
    <property type="evidence" value="ECO:0007669"/>
    <property type="project" value="UniProtKB-UniRule"/>
</dbReference>
<dbReference type="GO" id="GO:0000287">
    <property type="term" value="F:magnesium ion binding"/>
    <property type="evidence" value="ECO:0007669"/>
    <property type="project" value="UniProtKB-UniRule"/>
</dbReference>
<dbReference type="GO" id="GO:0009102">
    <property type="term" value="P:biotin biosynthetic process"/>
    <property type="evidence" value="ECO:0007669"/>
    <property type="project" value="UniProtKB-UniRule"/>
</dbReference>
<dbReference type="CDD" id="cd03109">
    <property type="entry name" value="DTBS"/>
    <property type="match status" value="1"/>
</dbReference>
<dbReference type="Gene3D" id="3.40.50.300">
    <property type="entry name" value="P-loop containing nucleotide triphosphate hydrolases"/>
    <property type="match status" value="1"/>
</dbReference>
<dbReference type="HAMAP" id="MF_00336">
    <property type="entry name" value="BioD"/>
    <property type="match status" value="1"/>
</dbReference>
<dbReference type="InterPro" id="IPR004472">
    <property type="entry name" value="DTB_synth_BioD"/>
</dbReference>
<dbReference type="InterPro" id="IPR027417">
    <property type="entry name" value="P-loop_NTPase"/>
</dbReference>
<dbReference type="NCBIfam" id="TIGR00347">
    <property type="entry name" value="bioD"/>
    <property type="match status" value="1"/>
</dbReference>
<dbReference type="PANTHER" id="PTHR43210:SF2">
    <property type="entry name" value="ATP-DEPENDENT DETHIOBIOTIN SYNTHETASE BIOD 2"/>
    <property type="match status" value="1"/>
</dbReference>
<dbReference type="PANTHER" id="PTHR43210">
    <property type="entry name" value="DETHIOBIOTIN SYNTHETASE"/>
    <property type="match status" value="1"/>
</dbReference>
<dbReference type="Pfam" id="PF13500">
    <property type="entry name" value="AAA_26"/>
    <property type="match status" value="1"/>
</dbReference>
<dbReference type="PIRSF" id="PIRSF006755">
    <property type="entry name" value="DTB_synth"/>
    <property type="match status" value="1"/>
</dbReference>
<dbReference type="SUPFAM" id="SSF52540">
    <property type="entry name" value="P-loop containing nucleoside triphosphate hydrolases"/>
    <property type="match status" value="1"/>
</dbReference>
<comment type="function">
    <text evidence="1">Catalyzes a mechanistically unusual reaction, the ATP-dependent insertion of CO2 between the N7 and N8 nitrogen atoms of 7,8-diaminopelargonic acid (DAPA, also called 7,8-diammoniononanoate) to form a ureido ring.</text>
</comment>
<comment type="catalytic activity">
    <reaction evidence="1">
        <text>(7R,8S)-7,8-diammoniononanoate + CO2 + ATP = (4R,5S)-dethiobiotin + ADP + phosphate + 3 H(+)</text>
        <dbReference type="Rhea" id="RHEA:15805"/>
        <dbReference type="ChEBI" id="CHEBI:15378"/>
        <dbReference type="ChEBI" id="CHEBI:16526"/>
        <dbReference type="ChEBI" id="CHEBI:30616"/>
        <dbReference type="ChEBI" id="CHEBI:43474"/>
        <dbReference type="ChEBI" id="CHEBI:149469"/>
        <dbReference type="ChEBI" id="CHEBI:149473"/>
        <dbReference type="ChEBI" id="CHEBI:456216"/>
        <dbReference type="EC" id="6.3.3.3"/>
    </reaction>
</comment>
<comment type="cofactor">
    <cofactor evidence="1">
        <name>Mg(2+)</name>
        <dbReference type="ChEBI" id="CHEBI:18420"/>
    </cofactor>
</comment>
<comment type="pathway">
    <text evidence="1">Cofactor biosynthesis; biotin biosynthesis; biotin from 7,8-diaminononanoate: step 1/2.</text>
</comment>
<comment type="subunit">
    <text evidence="1">Homodimer.</text>
</comment>
<comment type="subcellular location">
    <subcellularLocation>
        <location evidence="1">Cytoplasm</location>
    </subcellularLocation>
</comment>
<comment type="similarity">
    <text evidence="1">Belongs to the dethiobiotin synthetase family.</text>
</comment>
<protein>
    <recommendedName>
        <fullName evidence="1">ATP-dependent dethiobiotin synthetase BioD</fullName>
        <ecNumber evidence="1">6.3.3.3</ecNumber>
    </recommendedName>
    <alternativeName>
        <fullName evidence="1">DTB synthetase</fullName>
        <shortName evidence="1">DTBS</shortName>
    </alternativeName>
    <alternativeName>
        <fullName evidence="1">Dethiobiotin synthase</fullName>
    </alternativeName>
</protein>